<dbReference type="EC" id="4.3.2.10" evidence="1"/>
<dbReference type="EMBL" id="AM743169">
    <property type="protein sequence ID" value="CAQ45667.1"/>
    <property type="molecule type" value="Genomic_DNA"/>
</dbReference>
<dbReference type="RefSeq" id="WP_012480036.1">
    <property type="nucleotide sequence ID" value="NC_010943.1"/>
</dbReference>
<dbReference type="SMR" id="B2FPM4"/>
<dbReference type="EnsemblBacteria" id="CAQ45667">
    <property type="protein sequence ID" value="CAQ45667"/>
    <property type="gene ID" value="Smlt2168"/>
</dbReference>
<dbReference type="KEGG" id="sml:Smlt2168"/>
<dbReference type="PATRIC" id="fig|522373.3.peg.2061"/>
<dbReference type="eggNOG" id="COG0107">
    <property type="taxonomic scope" value="Bacteria"/>
</dbReference>
<dbReference type="HOGENOM" id="CLU_048577_4_0_6"/>
<dbReference type="UniPathway" id="UPA00031">
    <property type="reaction ID" value="UER00010"/>
</dbReference>
<dbReference type="Proteomes" id="UP000008840">
    <property type="component" value="Chromosome"/>
</dbReference>
<dbReference type="GO" id="GO:0005737">
    <property type="term" value="C:cytoplasm"/>
    <property type="evidence" value="ECO:0007669"/>
    <property type="project" value="UniProtKB-SubCell"/>
</dbReference>
<dbReference type="GO" id="GO:0000107">
    <property type="term" value="F:imidazoleglycerol-phosphate synthase activity"/>
    <property type="evidence" value="ECO:0007669"/>
    <property type="project" value="UniProtKB-UniRule"/>
</dbReference>
<dbReference type="GO" id="GO:0016829">
    <property type="term" value="F:lyase activity"/>
    <property type="evidence" value="ECO:0007669"/>
    <property type="project" value="UniProtKB-KW"/>
</dbReference>
<dbReference type="GO" id="GO:0000105">
    <property type="term" value="P:L-histidine biosynthetic process"/>
    <property type="evidence" value="ECO:0007669"/>
    <property type="project" value="UniProtKB-UniRule"/>
</dbReference>
<dbReference type="CDD" id="cd04731">
    <property type="entry name" value="HisF"/>
    <property type="match status" value="1"/>
</dbReference>
<dbReference type="FunFam" id="3.20.20.70:FF:000006">
    <property type="entry name" value="Imidazole glycerol phosphate synthase subunit HisF"/>
    <property type="match status" value="1"/>
</dbReference>
<dbReference type="Gene3D" id="3.20.20.70">
    <property type="entry name" value="Aldolase class I"/>
    <property type="match status" value="1"/>
</dbReference>
<dbReference type="HAMAP" id="MF_01013">
    <property type="entry name" value="HisF"/>
    <property type="match status" value="1"/>
</dbReference>
<dbReference type="InterPro" id="IPR013785">
    <property type="entry name" value="Aldolase_TIM"/>
</dbReference>
<dbReference type="InterPro" id="IPR006062">
    <property type="entry name" value="His_biosynth"/>
</dbReference>
<dbReference type="InterPro" id="IPR004651">
    <property type="entry name" value="HisF"/>
</dbReference>
<dbReference type="InterPro" id="IPR050064">
    <property type="entry name" value="IGPS_HisA/HisF"/>
</dbReference>
<dbReference type="InterPro" id="IPR011060">
    <property type="entry name" value="RibuloseP-bd_barrel"/>
</dbReference>
<dbReference type="NCBIfam" id="TIGR00735">
    <property type="entry name" value="hisF"/>
    <property type="match status" value="1"/>
</dbReference>
<dbReference type="PANTHER" id="PTHR21235:SF2">
    <property type="entry name" value="IMIDAZOLE GLYCEROL PHOSPHATE SYNTHASE HISHF"/>
    <property type="match status" value="1"/>
</dbReference>
<dbReference type="PANTHER" id="PTHR21235">
    <property type="entry name" value="IMIDAZOLE GLYCEROL PHOSPHATE SYNTHASE SUBUNIT HISF/H IGP SYNTHASE SUBUNIT HISF/H"/>
    <property type="match status" value="1"/>
</dbReference>
<dbReference type="Pfam" id="PF00977">
    <property type="entry name" value="His_biosynth"/>
    <property type="match status" value="1"/>
</dbReference>
<dbReference type="SUPFAM" id="SSF51366">
    <property type="entry name" value="Ribulose-phoshate binding barrel"/>
    <property type="match status" value="1"/>
</dbReference>
<evidence type="ECO:0000255" key="1">
    <source>
        <dbReference type="HAMAP-Rule" id="MF_01013"/>
    </source>
</evidence>
<comment type="function">
    <text evidence="1">IGPS catalyzes the conversion of PRFAR and glutamine to IGP, AICAR and glutamate. The HisF subunit catalyzes the cyclization activity that produces IGP and AICAR from PRFAR using the ammonia provided by the HisH subunit.</text>
</comment>
<comment type="catalytic activity">
    <reaction evidence="1">
        <text>5-[(5-phospho-1-deoxy-D-ribulos-1-ylimino)methylamino]-1-(5-phospho-beta-D-ribosyl)imidazole-4-carboxamide + L-glutamine = D-erythro-1-(imidazol-4-yl)glycerol 3-phosphate + 5-amino-1-(5-phospho-beta-D-ribosyl)imidazole-4-carboxamide + L-glutamate + H(+)</text>
        <dbReference type="Rhea" id="RHEA:24793"/>
        <dbReference type="ChEBI" id="CHEBI:15378"/>
        <dbReference type="ChEBI" id="CHEBI:29985"/>
        <dbReference type="ChEBI" id="CHEBI:58278"/>
        <dbReference type="ChEBI" id="CHEBI:58359"/>
        <dbReference type="ChEBI" id="CHEBI:58475"/>
        <dbReference type="ChEBI" id="CHEBI:58525"/>
        <dbReference type="EC" id="4.3.2.10"/>
    </reaction>
</comment>
<comment type="pathway">
    <text evidence="1">Amino-acid biosynthesis; L-histidine biosynthesis; L-histidine from 5-phospho-alpha-D-ribose 1-diphosphate: step 5/9.</text>
</comment>
<comment type="subunit">
    <text evidence="1">Heterodimer of HisH and HisF.</text>
</comment>
<comment type="subcellular location">
    <subcellularLocation>
        <location evidence="1">Cytoplasm</location>
    </subcellularLocation>
</comment>
<comment type="similarity">
    <text evidence="1">Belongs to the HisA/HisF family.</text>
</comment>
<protein>
    <recommendedName>
        <fullName evidence="1">Imidazole glycerol phosphate synthase subunit HisF</fullName>
        <ecNumber evidence="1">4.3.2.10</ecNumber>
    </recommendedName>
    <alternativeName>
        <fullName evidence="1">IGP synthase cyclase subunit</fullName>
    </alternativeName>
    <alternativeName>
        <fullName evidence="1">IGP synthase subunit HisF</fullName>
    </alternativeName>
    <alternativeName>
        <fullName evidence="1">ImGP synthase subunit HisF</fullName>
        <shortName evidence="1">IGPS subunit HisF</shortName>
    </alternativeName>
</protein>
<sequence length="258" mass="28339">MLSRRIIPCLDVRDGRVVKGVRFRDHVDMGDIAELAQRYRDQGADELVFYDIGASPEARSVDVAWIERIARLIDIPFCVAGGIDSVETARRVLFAGADKVSINSPALGRPELITELADEFGVQCVVVGVDSVRETDGQWRVRRFSGDPDKTQAVPLRTLDWIVEAQRRGAGEIVLNCMDSDGVRRGYDVVQLQQARALCQVPLIASGGAGAMEHFAEAFDQADVDGALAASVFHSGAIAIPELKRYLRGQQIEVRDVY</sequence>
<feature type="chain" id="PRO_1000135051" description="Imidazole glycerol phosphate synthase subunit HisF">
    <location>
        <begin position="1"/>
        <end position="258"/>
    </location>
</feature>
<feature type="active site" evidence="1">
    <location>
        <position position="11"/>
    </location>
</feature>
<feature type="active site" evidence="1">
    <location>
        <position position="130"/>
    </location>
</feature>
<keyword id="KW-0028">Amino-acid biosynthesis</keyword>
<keyword id="KW-0963">Cytoplasm</keyword>
<keyword id="KW-0368">Histidine biosynthesis</keyword>
<keyword id="KW-0456">Lyase</keyword>
<keyword id="KW-1185">Reference proteome</keyword>
<reference key="1">
    <citation type="journal article" date="2008" name="Genome Biol.">
        <title>The complete genome, comparative and functional analysis of Stenotrophomonas maltophilia reveals an organism heavily shielded by drug resistance determinants.</title>
        <authorList>
            <person name="Crossman L.C."/>
            <person name="Gould V.C."/>
            <person name="Dow J.M."/>
            <person name="Vernikos G.S."/>
            <person name="Okazaki A."/>
            <person name="Sebaihia M."/>
            <person name="Saunders D."/>
            <person name="Arrowsmith C."/>
            <person name="Carver T."/>
            <person name="Peters N."/>
            <person name="Adlem E."/>
            <person name="Kerhornou A."/>
            <person name="Lord A."/>
            <person name="Murphy L."/>
            <person name="Seeger K."/>
            <person name="Squares R."/>
            <person name="Rutter S."/>
            <person name="Quail M.A."/>
            <person name="Rajandream M.A."/>
            <person name="Harris D."/>
            <person name="Churcher C."/>
            <person name="Bentley S.D."/>
            <person name="Parkhill J."/>
            <person name="Thomson N.R."/>
            <person name="Avison M.B."/>
        </authorList>
    </citation>
    <scope>NUCLEOTIDE SEQUENCE [LARGE SCALE GENOMIC DNA]</scope>
    <source>
        <strain>K279a</strain>
    </source>
</reference>
<proteinExistence type="inferred from homology"/>
<name>HIS6_STRMK</name>
<gene>
    <name evidence="1" type="primary">hisF</name>
    <name type="ordered locus">Smlt2168</name>
</gene>
<organism>
    <name type="scientific">Stenotrophomonas maltophilia (strain K279a)</name>
    <dbReference type="NCBI Taxonomy" id="522373"/>
    <lineage>
        <taxon>Bacteria</taxon>
        <taxon>Pseudomonadati</taxon>
        <taxon>Pseudomonadota</taxon>
        <taxon>Gammaproteobacteria</taxon>
        <taxon>Lysobacterales</taxon>
        <taxon>Lysobacteraceae</taxon>
        <taxon>Stenotrophomonas</taxon>
        <taxon>Stenotrophomonas maltophilia group</taxon>
    </lineage>
</organism>
<accession>B2FPM4</accession>